<gene>
    <name evidence="1" type="primary">mraY</name>
    <name type="ordered locus">Syncc9605_2682</name>
</gene>
<evidence type="ECO:0000255" key="1">
    <source>
        <dbReference type="HAMAP-Rule" id="MF_00038"/>
    </source>
</evidence>
<organism>
    <name type="scientific">Synechococcus sp. (strain CC9605)</name>
    <dbReference type="NCBI Taxonomy" id="110662"/>
    <lineage>
        <taxon>Bacteria</taxon>
        <taxon>Bacillati</taxon>
        <taxon>Cyanobacteriota</taxon>
        <taxon>Cyanophyceae</taxon>
        <taxon>Synechococcales</taxon>
        <taxon>Synechococcaceae</taxon>
        <taxon>Synechococcus</taxon>
    </lineage>
</organism>
<protein>
    <recommendedName>
        <fullName evidence="1">Phospho-N-acetylmuramoyl-pentapeptide-transferase</fullName>
        <ecNumber evidence="1">2.7.8.13</ecNumber>
    </recommendedName>
    <alternativeName>
        <fullName evidence="1">UDP-MurNAc-pentapeptide phosphotransferase</fullName>
    </alternativeName>
</protein>
<keyword id="KW-0131">Cell cycle</keyword>
<keyword id="KW-0132">Cell division</keyword>
<keyword id="KW-0997">Cell inner membrane</keyword>
<keyword id="KW-1003">Cell membrane</keyword>
<keyword id="KW-0133">Cell shape</keyword>
<keyword id="KW-0961">Cell wall biogenesis/degradation</keyword>
<keyword id="KW-0460">Magnesium</keyword>
<keyword id="KW-0472">Membrane</keyword>
<keyword id="KW-0479">Metal-binding</keyword>
<keyword id="KW-0573">Peptidoglycan synthesis</keyword>
<keyword id="KW-0808">Transferase</keyword>
<keyword id="KW-0812">Transmembrane</keyword>
<keyword id="KW-1133">Transmembrane helix</keyword>
<reference key="1">
    <citation type="submission" date="2005-07" db="EMBL/GenBank/DDBJ databases">
        <title>Complete sequence of Synechococcus sp. CC9605.</title>
        <authorList>
            <consortium name="US DOE Joint Genome Institute"/>
            <person name="Copeland A."/>
            <person name="Lucas S."/>
            <person name="Lapidus A."/>
            <person name="Barry K."/>
            <person name="Detter J.C."/>
            <person name="Glavina T."/>
            <person name="Hammon N."/>
            <person name="Israni S."/>
            <person name="Pitluck S."/>
            <person name="Schmutz J."/>
            <person name="Martinez M."/>
            <person name="Larimer F."/>
            <person name="Land M."/>
            <person name="Kyrpides N."/>
            <person name="Ivanova N."/>
            <person name="Richardson P."/>
        </authorList>
    </citation>
    <scope>NUCLEOTIDE SEQUENCE [LARGE SCALE GENOMIC DNA]</scope>
    <source>
        <strain>CC9605</strain>
    </source>
</reference>
<sequence>MTASLLMLVVLMTSFAADKWITNAQLSLPLLIAAVCATATAAVGIPLLRRLKMGQFIREEGPKTHQSKAGTPTMGGLLVVPVGVVLGSLITRDAVASQQLLSLAVLTLAFMLIGGIDDWSSLTKHTNTGLTARGKLLLQAMATAAFLAIAAWQGWISSSIALPFGLELPLGLMIWPLGLFVVLAESNATNLTDGLDGLASGCGALVFTGLALQLMLRGDNGDPALAGFCMAMAGAWLGFLVHNRNPARAFMGDTGSLAMGAALSGVALLSNSLWPLLVMGGVFVAESLSVIIQVWVFKATKGPDGQGRRVFRMAPLHHHFELGGTDEQSVVPAFWLVTAGLVLLGLVLRP</sequence>
<feature type="chain" id="PRO_0000235490" description="Phospho-N-acetylmuramoyl-pentapeptide-transferase">
    <location>
        <begin position="1"/>
        <end position="350"/>
    </location>
</feature>
<feature type="transmembrane region" description="Helical" evidence="1">
    <location>
        <begin position="28"/>
        <end position="48"/>
    </location>
</feature>
<feature type="transmembrane region" description="Helical" evidence="1">
    <location>
        <begin position="70"/>
        <end position="90"/>
    </location>
</feature>
<feature type="transmembrane region" description="Helical" evidence="1">
    <location>
        <begin position="100"/>
        <end position="120"/>
    </location>
</feature>
<feature type="transmembrane region" description="Helical" evidence="1">
    <location>
        <begin position="136"/>
        <end position="156"/>
    </location>
</feature>
<feature type="transmembrane region" description="Helical" evidence="1">
    <location>
        <begin position="164"/>
        <end position="184"/>
    </location>
</feature>
<feature type="transmembrane region" description="Helical" evidence="1">
    <location>
        <begin position="195"/>
        <end position="215"/>
    </location>
</feature>
<feature type="transmembrane region" description="Helical" evidence="1">
    <location>
        <begin position="221"/>
        <end position="241"/>
    </location>
</feature>
<feature type="transmembrane region" description="Helical" evidence="1">
    <location>
        <begin position="249"/>
        <end position="269"/>
    </location>
</feature>
<feature type="transmembrane region" description="Helical" evidence="1">
    <location>
        <begin position="328"/>
        <end position="348"/>
    </location>
</feature>
<comment type="function">
    <text evidence="1">Catalyzes the initial step of the lipid cycle reactions in the biosynthesis of the cell wall peptidoglycan: transfers peptidoglycan precursor phospho-MurNAc-pentapeptide from UDP-MurNAc-pentapeptide onto the lipid carrier undecaprenyl phosphate, yielding undecaprenyl-pyrophosphoryl-MurNAc-pentapeptide, known as lipid I.</text>
</comment>
<comment type="catalytic activity">
    <reaction evidence="1">
        <text>UDP-N-acetyl-alpha-D-muramoyl-L-alanyl-gamma-D-glutamyl-meso-2,6-diaminopimeloyl-D-alanyl-D-alanine + di-trans,octa-cis-undecaprenyl phosphate = di-trans,octa-cis-undecaprenyl diphospho-N-acetyl-alpha-D-muramoyl-L-alanyl-D-glutamyl-meso-2,6-diaminopimeloyl-D-alanyl-D-alanine + UMP</text>
        <dbReference type="Rhea" id="RHEA:28386"/>
        <dbReference type="ChEBI" id="CHEBI:57865"/>
        <dbReference type="ChEBI" id="CHEBI:60392"/>
        <dbReference type="ChEBI" id="CHEBI:61386"/>
        <dbReference type="ChEBI" id="CHEBI:61387"/>
        <dbReference type="EC" id="2.7.8.13"/>
    </reaction>
</comment>
<comment type="cofactor">
    <cofactor evidence="1">
        <name>Mg(2+)</name>
        <dbReference type="ChEBI" id="CHEBI:18420"/>
    </cofactor>
</comment>
<comment type="pathway">
    <text evidence="1">Cell wall biogenesis; peptidoglycan biosynthesis.</text>
</comment>
<comment type="subcellular location">
    <subcellularLocation>
        <location evidence="1">Cell inner membrane</location>
        <topology evidence="1">Multi-pass membrane protein</topology>
    </subcellularLocation>
</comment>
<comment type="similarity">
    <text evidence="1">Belongs to the glycosyltransferase 4 family. MraY subfamily.</text>
</comment>
<dbReference type="EC" id="2.7.8.13" evidence="1"/>
<dbReference type="EMBL" id="CP000110">
    <property type="protein sequence ID" value="ABB36407.1"/>
    <property type="molecule type" value="Genomic_DNA"/>
</dbReference>
<dbReference type="RefSeq" id="WP_011365601.1">
    <property type="nucleotide sequence ID" value="NC_007516.1"/>
</dbReference>
<dbReference type="SMR" id="Q3AG75"/>
<dbReference type="STRING" id="110662.Syncc9605_2682"/>
<dbReference type="KEGG" id="syd:Syncc9605_2682"/>
<dbReference type="eggNOG" id="COG0472">
    <property type="taxonomic scope" value="Bacteria"/>
</dbReference>
<dbReference type="HOGENOM" id="CLU_023982_0_2_3"/>
<dbReference type="UniPathway" id="UPA00219"/>
<dbReference type="GO" id="GO:0005886">
    <property type="term" value="C:plasma membrane"/>
    <property type="evidence" value="ECO:0007669"/>
    <property type="project" value="UniProtKB-SubCell"/>
</dbReference>
<dbReference type="GO" id="GO:0046872">
    <property type="term" value="F:metal ion binding"/>
    <property type="evidence" value="ECO:0007669"/>
    <property type="project" value="UniProtKB-KW"/>
</dbReference>
<dbReference type="GO" id="GO:0008963">
    <property type="term" value="F:phospho-N-acetylmuramoyl-pentapeptide-transferase activity"/>
    <property type="evidence" value="ECO:0007669"/>
    <property type="project" value="UniProtKB-UniRule"/>
</dbReference>
<dbReference type="GO" id="GO:0051992">
    <property type="term" value="F:UDP-N-acetylmuramoyl-L-alanyl-D-glutamyl-meso-2,6-diaminopimelyl-D-alanyl-D-alanine:undecaprenyl-phosphate transferase activity"/>
    <property type="evidence" value="ECO:0007669"/>
    <property type="project" value="RHEA"/>
</dbReference>
<dbReference type="GO" id="GO:0051301">
    <property type="term" value="P:cell division"/>
    <property type="evidence" value="ECO:0007669"/>
    <property type="project" value="UniProtKB-KW"/>
</dbReference>
<dbReference type="GO" id="GO:0071555">
    <property type="term" value="P:cell wall organization"/>
    <property type="evidence" value="ECO:0007669"/>
    <property type="project" value="UniProtKB-KW"/>
</dbReference>
<dbReference type="GO" id="GO:0009252">
    <property type="term" value="P:peptidoglycan biosynthetic process"/>
    <property type="evidence" value="ECO:0007669"/>
    <property type="project" value="UniProtKB-UniRule"/>
</dbReference>
<dbReference type="GO" id="GO:0008360">
    <property type="term" value="P:regulation of cell shape"/>
    <property type="evidence" value="ECO:0007669"/>
    <property type="project" value="UniProtKB-KW"/>
</dbReference>
<dbReference type="CDD" id="cd06852">
    <property type="entry name" value="GT_MraY"/>
    <property type="match status" value="1"/>
</dbReference>
<dbReference type="HAMAP" id="MF_00038">
    <property type="entry name" value="MraY"/>
    <property type="match status" value="1"/>
</dbReference>
<dbReference type="InterPro" id="IPR000715">
    <property type="entry name" value="Glycosyl_transferase_4"/>
</dbReference>
<dbReference type="InterPro" id="IPR003524">
    <property type="entry name" value="PNAcMuramoyl-5peptid_Trfase"/>
</dbReference>
<dbReference type="InterPro" id="IPR018480">
    <property type="entry name" value="PNAcMuramoyl-5peptid_Trfase_CS"/>
</dbReference>
<dbReference type="NCBIfam" id="TIGR00445">
    <property type="entry name" value="mraY"/>
    <property type="match status" value="1"/>
</dbReference>
<dbReference type="PANTHER" id="PTHR22926">
    <property type="entry name" value="PHOSPHO-N-ACETYLMURAMOYL-PENTAPEPTIDE-TRANSFERASE"/>
    <property type="match status" value="1"/>
</dbReference>
<dbReference type="PANTHER" id="PTHR22926:SF5">
    <property type="entry name" value="PHOSPHO-N-ACETYLMURAMOYL-PENTAPEPTIDE-TRANSFERASE HOMOLOG"/>
    <property type="match status" value="1"/>
</dbReference>
<dbReference type="Pfam" id="PF00953">
    <property type="entry name" value="Glycos_transf_4"/>
    <property type="match status" value="1"/>
</dbReference>
<dbReference type="Pfam" id="PF10555">
    <property type="entry name" value="MraY_sig1"/>
    <property type="match status" value="1"/>
</dbReference>
<dbReference type="PROSITE" id="PS01347">
    <property type="entry name" value="MRAY_1"/>
    <property type="match status" value="1"/>
</dbReference>
<dbReference type="PROSITE" id="PS01348">
    <property type="entry name" value="MRAY_2"/>
    <property type="match status" value="1"/>
</dbReference>
<name>MRAY_SYNSC</name>
<accession>Q3AG75</accession>
<proteinExistence type="inferred from homology"/>